<gene>
    <name evidence="1" type="primary">rpsB</name>
    <name type="ordered locus">Bd3780</name>
</gene>
<organism>
    <name type="scientific">Bdellovibrio bacteriovorus (strain ATCC 15356 / DSM 50701 / NCIMB 9529 / HD100)</name>
    <dbReference type="NCBI Taxonomy" id="264462"/>
    <lineage>
        <taxon>Bacteria</taxon>
        <taxon>Pseudomonadati</taxon>
        <taxon>Bdellovibrionota</taxon>
        <taxon>Bdellovibrionia</taxon>
        <taxon>Bdellovibrionales</taxon>
        <taxon>Pseudobdellovibrionaceae</taxon>
        <taxon>Bdellovibrio</taxon>
    </lineage>
</organism>
<name>RS2_BDEBA</name>
<feature type="chain" id="PRO_1000003897" description="Small ribosomal subunit protein uS2">
    <location>
        <begin position="1"/>
        <end position="313"/>
    </location>
</feature>
<feature type="region of interest" description="Disordered" evidence="2">
    <location>
        <begin position="233"/>
        <end position="293"/>
    </location>
</feature>
<feature type="compositionally biased region" description="Basic and acidic residues" evidence="2">
    <location>
        <begin position="233"/>
        <end position="256"/>
    </location>
</feature>
<proteinExistence type="inferred from homology"/>
<protein>
    <recommendedName>
        <fullName evidence="1">Small ribosomal subunit protein uS2</fullName>
    </recommendedName>
    <alternativeName>
        <fullName evidence="3">30S ribosomal protein S2</fullName>
    </alternativeName>
</protein>
<keyword id="KW-1185">Reference proteome</keyword>
<keyword id="KW-0687">Ribonucleoprotein</keyword>
<keyword id="KW-0689">Ribosomal protein</keyword>
<dbReference type="EMBL" id="BX842656">
    <property type="protein sequence ID" value="CAE81141.1"/>
    <property type="molecule type" value="Genomic_DNA"/>
</dbReference>
<dbReference type="SMR" id="Q6MGY6"/>
<dbReference type="STRING" id="264462.Bd3780"/>
<dbReference type="KEGG" id="bba:Bd3780"/>
<dbReference type="eggNOG" id="COG0052">
    <property type="taxonomic scope" value="Bacteria"/>
</dbReference>
<dbReference type="HOGENOM" id="CLU_040318_2_2_7"/>
<dbReference type="Proteomes" id="UP000008080">
    <property type="component" value="Chromosome"/>
</dbReference>
<dbReference type="GO" id="GO:0022627">
    <property type="term" value="C:cytosolic small ribosomal subunit"/>
    <property type="evidence" value="ECO:0007669"/>
    <property type="project" value="TreeGrafter"/>
</dbReference>
<dbReference type="GO" id="GO:0003735">
    <property type="term" value="F:structural constituent of ribosome"/>
    <property type="evidence" value="ECO:0007669"/>
    <property type="project" value="InterPro"/>
</dbReference>
<dbReference type="GO" id="GO:0006412">
    <property type="term" value="P:translation"/>
    <property type="evidence" value="ECO:0007669"/>
    <property type="project" value="UniProtKB-UniRule"/>
</dbReference>
<dbReference type="CDD" id="cd01425">
    <property type="entry name" value="RPS2"/>
    <property type="match status" value="1"/>
</dbReference>
<dbReference type="FunFam" id="1.10.287.610:FF:000001">
    <property type="entry name" value="30S ribosomal protein S2"/>
    <property type="match status" value="1"/>
</dbReference>
<dbReference type="Gene3D" id="3.40.50.10490">
    <property type="entry name" value="Glucose-6-phosphate isomerase like protein, domain 1"/>
    <property type="match status" value="1"/>
</dbReference>
<dbReference type="Gene3D" id="1.10.287.610">
    <property type="entry name" value="Helix hairpin bin"/>
    <property type="match status" value="1"/>
</dbReference>
<dbReference type="HAMAP" id="MF_00291_B">
    <property type="entry name" value="Ribosomal_uS2_B"/>
    <property type="match status" value="1"/>
</dbReference>
<dbReference type="InterPro" id="IPR001865">
    <property type="entry name" value="Ribosomal_uS2"/>
</dbReference>
<dbReference type="InterPro" id="IPR005706">
    <property type="entry name" value="Ribosomal_uS2_bac/mit/plastid"/>
</dbReference>
<dbReference type="InterPro" id="IPR018130">
    <property type="entry name" value="Ribosomal_uS2_CS"/>
</dbReference>
<dbReference type="InterPro" id="IPR023591">
    <property type="entry name" value="Ribosomal_uS2_flav_dom_sf"/>
</dbReference>
<dbReference type="NCBIfam" id="TIGR01011">
    <property type="entry name" value="rpsB_bact"/>
    <property type="match status" value="1"/>
</dbReference>
<dbReference type="PANTHER" id="PTHR12534">
    <property type="entry name" value="30S RIBOSOMAL PROTEIN S2 PROKARYOTIC AND ORGANELLAR"/>
    <property type="match status" value="1"/>
</dbReference>
<dbReference type="PANTHER" id="PTHR12534:SF0">
    <property type="entry name" value="SMALL RIBOSOMAL SUBUNIT PROTEIN US2M"/>
    <property type="match status" value="1"/>
</dbReference>
<dbReference type="Pfam" id="PF00318">
    <property type="entry name" value="Ribosomal_S2"/>
    <property type="match status" value="1"/>
</dbReference>
<dbReference type="PRINTS" id="PR00395">
    <property type="entry name" value="RIBOSOMALS2"/>
</dbReference>
<dbReference type="SUPFAM" id="SSF52313">
    <property type="entry name" value="Ribosomal protein S2"/>
    <property type="match status" value="1"/>
</dbReference>
<dbReference type="PROSITE" id="PS00962">
    <property type="entry name" value="RIBOSOMAL_S2_1"/>
    <property type="match status" value="1"/>
</dbReference>
<dbReference type="PROSITE" id="PS00963">
    <property type="entry name" value="RIBOSOMAL_S2_2"/>
    <property type="match status" value="1"/>
</dbReference>
<evidence type="ECO:0000255" key="1">
    <source>
        <dbReference type="HAMAP-Rule" id="MF_00291"/>
    </source>
</evidence>
<evidence type="ECO:0000256" key="2">
    <source>
        <dbReference type="SAM" id="MobiDB-lite"/>
    </source>
</evidence>
<evidence type="ECO:0000305" key="3"/>
<sequence>MAQVTMKEMLDAGVHFGHQTQRWNPKMKPYVYTARGGIHIIDLQKTVVRANKAAEFVKEIAANGGRLIFVGTKKQAIEPIQEAAAKCGQYYVTKRWLGGMMTNFETIKSSIDRLRKIDTMKEKGEFNYLTKKERAKLEKEYLRLTDFLAGIRDMKEMPSAMFVVDLPKEHIAVAEAKRLGIPVVAIADTNSDPESVDFAIPGNDDAIRSIKLFSNLVADAYLEGAKEWEGKLRTMTDKQSDVAKEAKADGKEEAPKRRGAGAKAGAKEAPKKSAGPAVVKATKSRKLVAAGTAEEVEIQAELEQGQSTDESAE</sequence>
<accession>Q6MGY6</accession>
<reference key="1">
    <citation type="journal article" date="2004" name="Science">
        <title>A predator unmasked: life cycle of Bdellovibrio bacteriovorus from a genomic perspective.</title>
        <authorList>
            <person name="Rendulic S."/>
            <person name="Jagtap P."/>
            <person name="Rosinus A."/>
            <person name="Eppinger M."/>
            <person name="Baar C."/>
            <person name="Lanz C."/>
            <person name="Keller H."/>
            <person name="Lambert C."/>
            <person name="Evans K.J."/>
            <person name="Goesmann A."/>
            <person name="Meyer F."/>
            <person name="Sockett R.E."/>
            <person name="Schuster S.C."/>
        </authorList>
    </citation>
    <scope>NUCLEOTIDE SEQUENCE [LARGE SCALE GENOMIC DNA]</scope>
    <source>
        <strain>ATCC 15356 / DSM 50701 / NCIMB 9529 / HD100</strain>
    </source>
</reference>
<comment type="similarity">
    <text evidence="1">Belongs to the universal ribosomal protein uS2 family.</text>
</comment>